<name>AP4M1_HUMAN</name>
<protein>
    <recommendedName>
        <fullName evidence="15">AP-4 complex subunit mu-1</fullName>
    </recommendedName>
    <alternativeName>
        <fullName>AP-4 adaptor complex mu subunit</fullName>
    </alternativeName>
    <alternativeName>
        <fullName>Adaptor-related protein complex 4 subunit mu-1</fullName>
    </alternativeName>
    <alternativeName>
        <fullName>Mu subunit of AP-4</fullName>
    </alternativeName>
    <alternativeName>
        <fullName>Mu-adaptin-related protein 2</fullName>
        <shortName>mu-ARP2</shortName>
    </alternativeName>
    <alternativeName>
        <fullName>Mu4-adaptin</fullName>
        <shortName>mu4</shortName>
    </alternativeName>
</protein>
<sequence length="453" mass="49977">MISQFFILSSKGDPLIYKDFRGDSGGRDVAELFYRKLTGLPGDESPVVMHHHGRHFIHIRHSGLYLVVTTSENVSPFSLLELLSRLATLLGDYCGSLGEGTISRNVALVYELLDEVLDYGYVQTTSTEMLRNFIQTEAVVSKPFSLFDLSSVGLFGAETQQSKVAPSSAASRPVLSSRSDQSQKNEVFLDVVERLSVLIASNGSLLKVDVQGEIRLKSFLPSGSEMRIGLTEEFCVGKSELRGYGPGIRVDEVSFHSSVNLDEFESHRILRLQPPQGELTVMRYQLSDDLPSPLPFRLFPSVQWDRGSGRLQVYLKLRCDLLSKSQALNVRLHLPLPRGVVSLSQELSSPEQKAELAEGALRWDLPRVQGGSQLSGLFQMDVPGPPGPPSHGLSTSASPLGLGPASLSFELPRHTCSGLQVRFLRLAFRPCGNANPHKWVRHLSHSDAYVIRI</sequence>
<organism>
    <name type="scientific">Homo sapiens</name>
    <name type="common">Human</name>
    <dbReference type="NCBI Taxonomy" id="9606"/>
    <lineage>
        <taxon>Eukaryota</taxon>
        <taxon>Metazoa</taxon>
        <taxon>Chordata</taxon>
        <taxon>Craniata</taxon>
        <taxon>Vertebrata</taxon>
        <taxon>Euteleostomi</taxon>
        <taxon>Mammalia</taxon>
        <taxon>Eutheria</taxon>
        <taxon>Euarchontoglires</taxon>
        <taxon>Primates</taxon>
        <taxon>Haplorrhini</taxon>
        <taxon>Catarrhini</taxon>
        <taxon>Hominidae</taxon>
        <taxon>Homo</taxon>
    </lineage>
</organism>
<dbReference type="EMBL" id="Y08387">
    <property type="protein sequence ID" value="CAA69667.1"/>
    <property type="molecule type" value="mRNA"/>
</dbReference>
<dbReference type="EMBL" id="AF155158">
    <property type="protein sequence ID" value="AAD43328.1"/>
    <property type="molecule type" value="mRNA"/>
</dbReference>
<dbReference type="EMBL" id="AF020796">
    <property type="protein sequence ID" value="AAD25869.1"/>
    <property type="molecule type" value="mRNA"/>
</dbReference>
<dbReference type="EMBL" id="CH471091">
    <property type="protein sequence ID" value="EAW76594.1"/>
    <property type="molecule type" value="Genomic_DNA"/>
</dbReference>
<dbReference type="EMBL" id="CH471091">
    <property type="protein sequence ID" value="EAW76597.1"/>
    <property type="molecule type" value="Genomic_DNA"/>
</dbReference>
<dbReference type="EMBL" id="BC018705">
    <property type="protein sequence ID" value="AAH18705.1"/>
    <property type="molecule type" value="mRNA"/>
</dbReference>
<dbReference type="CCDS" id="CCDS5685.1"/>
<dbReference type="RefSeq" id="NP_004713.2">
    <property type="nucleotide sequence ID" value="NM_004722.3"/>
</dbReference>
<dbReference type="RefSeq" id="XP_047276981.1">
    <property type="nucleotide sequence ID" value="XM_047421025.1"/>
</dbReference>
<dbReference type="RefSeq" id="XP_047276982.1">
    <property type="nucleotide sequence ID" value="XM_047421026.1"/>
</dbReference>
<dbReference type="RefSeq" id="XP_054215293.1">
    <property type="nucleotide sequence ID" value="XM_054359318.1"/>
</dbReference>
<dbReference type="RefSeq" id="XP_054215294.1">
    <property type="nucleotide sequence ID" value="XM_054359319.1"/>
</dbReference>
<dbReference type="PDB" id="3L81">
    <property type="method" value="X-ray"/>
    <property type="resolution" value="1.60 A"/>
    <property type="chains" value="A=160-453"/>
</dbReference>
<dbReference type="PDB" id="4MDR">
    <property type="method" value="X-ray"/>
    <property type="resolution" value="1.85 A"/>
    <property type="chains" value="A=160-453"/>
</dbReference>
<dbReference type="PDBsum" id="3L81"/>
<dbReference type="PDBsum" id="4MDR"/>
<dbReference type="SMR" id="O00189"/>
<dbReference type="BioGRID" id="114616">
    <property type="interactions" value="52"/>
</dbReference>
<dbReference type="ComplexPortal" id="CPX-5151">
    <property type="entry name" value="AP-4 Adaptor complex"/>
</dbReference>
<dbReference type="CORUM" id="O00189"/>
<dbReference type="FunCoup" id="O00189">
    <property type="interactions" value="1882"/>
</dbReference>
<dbReference type="IntAct" id="O00189">
    <property type="interactions" value="40"/>
</dbReference>
<dbReference type="MINT" id="O00189"/>
<dbReference type="STRING" id="9606.ENSP00000403663"/>
<dbReference type="TCDB" id="9.B.278.1.5">
    <property type="family name" value="the organellar-targeting adaptor protein complex (o-apc) family"/>
</dbReference>
<dbReference type="iPTMnet" id="O00189"/>
<dbReference type="PhosphoSitePlus" id="O00189"/>
<dbReference type="BioMuta" id="AP4M1"/>
<dbReference type="jPOST" id="O00189"/>
<dbReference type="MassIVE" id="O00189"/>
<dbReference type="PaxDb" id="9606-ENSP00000352603"/>
<dbReference type="PeptideAtlas" id="O00189"/>
<dbReference type="ProteomicsDB" id="47769"/>
<dbReference type="Pumba" id="O00189"/>
<dbReference type="TopDownProteomics" id="O00189"/>
<dbReference type="Antibodypedia" id="30540">
    <property type="antibodies" value="175 antibodies from 25 providers"/>
</dbReference>
<dbReference type="DNASU" id="9179"/>
<dbReference type="Ensembl" id="ENST00000359593.9">
    <property type="protein sequence ID" value="ENSP00000352603.4"/>
    <property type="gene ID" value="ENSG00000221838.12"/>
</dbReference>
<dbReference type="Ensembl" id="ENST00000421755.5">
    <property type="protein sequence ID" value="ENSP00000412185.1"/>
    <property type="gene ID" value="ENSG00000221838.12"/>
</dbReference>
<dbReference type="Ensembl" id="ENST00000713591.1">
    <property type="protein sequence ID" value="ENSP00000518888.1"/>
    <property type="gene ID" value="ENSG00000221838.12"/>
</dbReference>
<dbReference type="Ensembl" id="ENST00000713791.1">
    <property type="protein sequence ID" value="ENSP00000519097.1"/>
    <property type="gene ID" value="ENSG00000221838.12"/>
</dbReference>
<dbReference type="GeneID" id="9179"/>
<dbReference type="KEGG" id="hsa:9179"/>
<dbReference type="MANE-Select" id="ENST00000359593.9">
    <property type="protein sequence ID" value="ENSP00000352603.4"/>
    <property type="RefSeq nucleotide sequence ID" value="NM_004722.4"/>
    <property type="RefSeq protein sequence ID" value="NP_004713.2"/>
</dbReference>
<dbReference type="UCSC" id="uc003utb.5">
    <property type="organism name" value="human"/>
</dbReference>
<dbReference type="AGR" id="HGNC:574"/>
<dbReference type="CTD" id="9179"/>
<dbReference type="DisGeNET" id="9179"/>
<dbReference type="GeneCards" id="AP4M1"/>
<dbReference type="GeneReviews" id="AP4M1"/>
<dbReference type="HGNC" id="HGNC:574">
    <property type="gene designation" value="AP4M1"/>
</dbReference>
<dbReference type="HPA" id="ENSG00000221838">
    <property type="expression patterns" value="Low tissue specificity"/>
</dbReference>
<dbReference type="MalaCards" id="AP4M1"/>
<dbReference type="MIM" id="602296">
    <property type="type" value="gene"/>
</dbReference>
<dbReference type="MIM" id="612936">
    <property type="type" value="phenotype"/>
</dbReference>
<dbReference type="neXtProt" id="NX_O00189"/>
<dbReference type="OpenTargets" id="ENSG00000221838"/>
<dbReference type="Orphanet" id="280763">
    <property type="disease" value="Severe intellectual disability and progressive spastic paraplegia"/>
</dbReference>
<dbReference type="PharmGKB" id="PA24866"/>
<dbReference type="VEuPathDB" id="HostDB:ENSG00000221838"/>
<dbReference type="eggNOG" id="KOG0937">
    <property type="taxonomic scope" value="Eukaryota"/>
</dbReference>
<dbReference type="GeneTree" id="ENSGT00940000159929"/>
<dbReference type="InParanoid" id="O00189"/>
<dbReference type="OMA" id="DYGYIQN"/>
<dbReference type="OrthoDB" id="10259133at2759"/>
<dbReference type="PAN-GO" id="O00189">
    <property type="GO annotations" value="4 GO annotations based on evolutionary models"/>
</dbReference>
<dbReference type="PhylomeDB" id="O00189"/>
<dbReference type="TreeFam" id="TF329745"/>
<dbReference type="PathwayCommons" id="O00189"/>
<dbReference type="Reactome" id="R-HSA-432720">
    <property type="pathway name" value="Lysosome Vesicle Biogenesis"/>
</dbReference>
<dbReference type="SignaLink" id="O00189"/>
<dbReference type="BioGRID-ORCS" id="9179">
    <property type="hits" value="11 hits in 1159 CRISPR screens"/>
</dbReference>
<dbReference type="ChiTaRS" id="AP4M1">
    <property type="organism name" value="human"/>
</dbReference>
<dbReference type="EvolutionaryTrace" id="O00189"/>
<dbReference type="GeneWiki" id="AP4M1"/>
<dbReference type="GenomeRNAi" id="9179"/>
<dbReference type="Pharos" id="O00189">
    <property type="development level" value="Tbio"/>
</dbReference>
<dbReference type="PRO" id="PR:O00189"/>
<dbReference type="Proteomes" id="UP000005640">
    <property type="component" value="Chromosome 7"/>
</dbReference>
<dbReference type="RNAct" id="O00189">
    <property type="molecule type" value="protein"/>
</dbReference>
<dbReference type="Bgee" id="ENSG00000221838">
    <property type="expression patterns" value="Expressed in left testis and 111 other cell types or tissues"/>
</dbReference>
<dbReference type="ExpressionAtlas" id="O00189">
    <property type="expression patterns" value="baseline and differential"/>
</dbReference>
<dbReference type="GO" id="GO:0030124">
    <property type="term" value="C:AP-4 adaptor complex"/>
    <property type="evidence" value="ECO:0000314"/>
    <property type="project" value="UniProtKB"/>
</dbReference>
<dbReference type="GO" id="GO:0030131">
    <property type="term" value="C:clathrin adaptor complex"/>
    <property type="evidence" value="ECO:0007669"/>
    <property type="project" value="InterPro"/>
</dbReference>
<dbReference type="GO" id="GO:0031410">
    <property type="term" value="C:cytoplasmic vesicle"/>
    <property type="evidence" value="ECO:0000318"/>
    <property type="project" value="GO_Central"/>
</dbReference>
<dbReference type="GO" id="GO:0005829">
    <property type="term" value="C:cytosol"/>
    <property type="evidence" value="ECO:0007669"/>
    <property type="project" value="GOC"/>
</dbReference>
<dbReference type="GO" id="GO:0005769">
    <property type="term" value="C:early endosome"/>
    <property type="evidence" value="ECO:0000250"/>
    <property type="project" value="UniProtKB"/>
</dbReference>
<dbReference type="GO" id="GO:0031904">
    <property type="term" value="C:endosome lumen"/>
    <property type="evidence" value="ECO:0000304"/>
    <property type="project" value="Reactome"/>
</dbReference>
<dbReference type="GO" id="GO:0070062">
    <property type="term" value="C:extracellular exosome"/>
    <property type="evidence" value="ECO:0007005"/>
    <property type="project" value="UniProtKB"/>
</dbReference>
<dbReference type="GO" id="GO:0005802">
    <property type="term" value="C:trans-Golgi network"/>
    <property type="evidence" value="ECO:0000314"/>
    <property type="project" value="UniProtKB"/>
</dbReference>
<dbReference type="GO" id="GO:0032588">
    <property type="term" value="C:trans-Golgi network membrane"/>
    <property type="evidence" value="ECO:0000304"/>
    <property type="project" value="Reactome"/>
</dbReference>
<dbReference type="GO" id="GO:0019904">
    <property type="term" value="F:protein domain specific binding"/>
    <property type="evidence" value="ECO:0000314"/>
    <property type="project" value="UniProtKB"/>
</dbReference>
<dbReference type="GO" id="GO:0008320">
    <property type="term" value="F:protein transmembrane transporter activity"/>
    <property type="evidence" value="ECO:0000304"/>
    <property type="project" value="Reactome"/>
</dbReference>
<dbReference type="GO" id="GO:0000045">
    <property type="term" value="P:autophagosome assembly"/>
    <property type="evidence" value="ECO:0000315"/>
    <property type="project" value="UniProtKB"/>
</dbReference>
<dbReference type="GO" id="GO:0006895">
    <property type="term" value="P:Golgi to endosome transport"/>
    <property type="evidence" value="ECO:0000315"/>
    <property type="project" value="UniProtKB"/>
</dbReference>
<dbReference type="GO" id="GO:0090160">
    <property type="term" value="P:Golgi to lysosome transport"/>
    <property type="evidence" value="ECO:0000314"/>
    <property type="project" value="UniProtKB"/>
</dbReference>
<dbReference type="GO" id="GO:0006886">
    <property type="term" value="P:intracellular protein transport"/>
    <property type="evidence" value="ECO:0000315"/>
    <property type="project" value="UniProtKB"/>
</dbReference>
<dbReference type="GO" id="GO:0006892">
    <property type="term" value="P:post-Golgi vesicle-mediated transport"/>
    <property type="evidence" value="ECO:0000304"/>
    <property type="project" value="Reactome"/>
</dbReference>
<dbReference type="GO" id="GO:0008104">
    <property type="term" value="P:protein localization"/>
    <property type="evidence" value="ECO:0000250"/>
    <property type="project" value="UniProtKB"/>
</dbReference>
<dbReference type="GO" id="GO:1903361">
    <property type="term" value="P:protein localization to basolateral plasma membrane"/>
    <property type="evidence" value="ECO:0000250"/>
    <property type="project" value="UniProtKB"/>
</dbReference>
<dbReference type="GO" id="GO:0006605">
    <property type="term" value="P:protein targeting"/>
    <property type="evidence" value="ECO:0000314"/>
    <property type="project" value="UniProtKB"/>
</dbReference>
<dbReference type="GO" id="GO:0006622">
    <property type="term" value="P:protein targeting to lysosome"/>
    <property type="evidence" value="ECO:0000314"/>
    <property type="project" value="UniProtKB"/>
</dbReference>
<dbReference type="GO" id="GO:0016192">
    <property type="term" value="P:vesicle-mediated transport"/>
    <property type="evidence" value="ECO:0000303"/>
    <property type="project" value="ComplexPortal"/>
</dbReference>
<dbReference type="CDD" id="cd09253">
    <property type="entry name" value="AP-4_Mu4_Cterm"/>
    <property type="match status" value="1"/>
</dbReference>
<dbReference type="CDD" id="cd14838">
    <property type="entry name" value="AP4_Mu_N"/>
    <property type="match status" value="1"/>
</dbReference>
<dbReference type="FunFam" id="2.60.40.1170:FF:000021">
    <property type="entry name" value="AP-4 complex subunit mu-1 isoform X1"/>
    <property type="match status" value="1"/>
</dbReference>
<dbReference type="FunFam" id="3.30.450.60:FF:000018">
    <property type="entry name" value="AP-4 complex subunit mu-1 isoform X1"/>
    <property type="match status" value="1"/>
</dbReference>
<dbReference type="Gene3D" id="3.30.450.60">
    <property type="match status" value="1"/>
</dbReference>
<dbReference type="Gene3D" id="2.60.40.1170">
    <property type="entry name" value="Mu homology domain, subdomain B"/>
    <property type="match status" value="2"/>
</dbReference>
<dbReference type="InterPro" id="IPR050431">
    <property type="entry name" value="Adaptor_comp_med_subunit"/>
</dbReference>
<dbReference type="InterPro" id="IPR036168">
    <property type="entry name" value="AP2_Mu_C_sf"/>
</dbReference>
<dbReference type="InterPro" id="IPR022775">
    <property type="entry name" value="AP_mu_sigma_su"/>
</dbReference>
<dbReference type="InterPro" id="IPR001392">
    <property type="entry name" value="Clathrin_mu"/>
</dbReference>
<dbReference type="InterPro" id="IPR018240">
    <property type="entry name" value="Clathrin_mu_CS"/>
</dbReference>
<dbReference type="InterPro" id="IPR011012">
    <property type="entry name" value="Longin-like_dom_sf"/>
</dbReference>
<dbReference type="InterPro" id="IPR028565">
    <property type="entry name" value="MHD"/>
</dbReference>
<dbReference type="PANTHER" id="PTHR10529">
    <property type="entry name" value="AP COMPLEX SUBUNIT MU"/>
    <property type="match status" value="1"/>
</dbReference>
<dbReference type="Pfam" id="PF00928">
    <property type="entry name" value="Adap_comp_sub"/>
    <property type="match status" value="1"/>
</dbReference>
<dbReference type="Pfam" id="PF01217">
    <property type="entry name" value="Clat_adaptor_s"/>
    <property type="match status" value="1"/>
</dbReference>
<dbReference type="PIRSF" id="PIRSF005992">
    <property type="entry name" value="Clathrin_mu"/>
    <property type="match status" value="1"/>
</dbReference>
<dbReference type="PRINTS" id="PR00314">
    <property type="entry name" value="CLATHRINADPT"/>
</dbReference>
<dbReference type="SUPFAM" id="SSF49447">
    <property type="entry name" value="Second domain of Mu2 adaptin subunit (ap50) of ap2 adaptor"/>
    <property type="match status" value="1"/>
</dbReference>
<dbReference type="SUPFAM" id="SSF64356">
    <property type="entry name" value="SNARE-like"/>
    <property type="match status" value="1"/>
</dbReference>
<dbReference type="PROSITE" id="PS00991">
    <property type="entry name" value="CLAT_ADAPTOR_M_2"/>
    <property type="match status" value="1"/>
</dbReference>
<dbReference type="PROSITE" id="PS51072">
    <property type="entry name" value="MHD"/>
    <property type="match status" value="1"/>
</dbReference>
<comment type="function">
    <text evidence="1 2 3 5 6 7 8 10 11">Component of the adaptor protein complex 4 (AP-4). Adaptor protein complexes are vesicle coat components involved both in vesicle formation and cargo selection. They control the vesicular transport of proteins in different trafficking pathways (PubMed:10066790, PubMed:10436028, PubMed:11139587, PubMed:11802162, PubMed:20230749). AP-4 forms a non clathrin-associated coat on vesicles departing the trans-Golgi network (TGN) and may be involved in the targeting of proteins from the trans-Golgi network (TGN) to the endosomal-lysosomal system (PubMed:11139587, PubMed:20230749). It is also involved in protein sorting to the basolateral membrane in epithelial cells and the proper asymmetric localization of somatodendritic proteins in neurons (By similarity). Within AP-4, the mu-type subunit AP4M1 is directly involved in the recognition and binding of tyrosine-based sorting signals found in the cytoplasmic part of cargos (PubMed:10436028, PubMed:11139587, PubMed:20230749, PubMed:26544806). The adaptor protein complex 4 (AP-4) may also recognize other types of sorting signal (By similarity).</text>
</comment>
<comment type="subunit">
    <text evidence="2 3 5 6 7 8 10 11 12 13">Adaptor protein complex 4 (AP-4) is a heterotetramer composed of two large adaptins (epsilon-type subunit AP4E1 and beta-type subunit AP4B1), a medium adaptin (mu-type subunit AP4M1) and a small adaptin (sigma-type AP4S1) (PubMed:10066790, PubMed:10436028, PubMed:11802162). Interacts with tyrosine-based sorting signals on the cytoplasmic tail of cargo proteins such as APP, ATG9A, LAMP2 and NAGPA (PubMed:11139587, PubMed:20230749, PubMed:26544806, PubMed:29180427). Interacts with the C-terminal domain of GRID2 (By similarity). Interacts with GRIA1 and GRIA2; the interaction is indirect via CACNG3 (By similarity). Interacts with CACNG3; CACNG3 associates GRIA1 and GRIA2 with the adaptor protein complex 4 (AP-4) to target them to the somatodendritic compartment of neurons (By similarity). Interacts with HOOK1 and HOOK2; the interactions are direct, mediate the interaction between FTS-Hook-FHIP (FHF) complex and AP-4 and the perinuclear distribution of AP-4 (PubMed:32073997).</text>
</comment>
<comment type="interaction">
    <interactant intactId="EBI-3914106">
        <id>O00189</id>
    </interactant>
    <interactant intactId="EBI-602336">
        <id>P49354</id>
        <label>FNTA</label>
    </interactant>
    <organismsDiffer>false</organismsDiffer>
    <experiments>3</experiments>
</comment>
<comment type="interaction">
    <interactant intactId="EBI-3914106">
        <id>O00189</id>
    </interactant>
    <interactant intactId="EBI-746704">
        <id>Q9UJC3</id>
        <label>HOOK1</label>
    </interactant>
    <organismsDiffer>false</organismsDiffer>
    <experiments>4</experiments>
</comment>
<comment type="interaction">
    <interactant intactId="EBI-3914106">
        <id>O00189</id>
    </interactant>
    <interactant intactId="EBI-11139477">
        <id>Q96N21</id>
        <label>TEPSIN</label>
    </interactant>
    <organismsDiffer>false</organismsDiffer>
    <experiments>6</experiments>
</comment>
<comment type="interaction">
    <interactant intactId="EBI-3914106">
        <id>O00189</id>
    </interactant>
    <interactant intactId="EBI-2514143">
        <id>Q96K76</id>
        <label>USP47</label>
    </interactant>
    <organismsDiffer>false</organismsDiffer>
    <experiments>3</experiments>
</comment>
<comment type="interaction">
    <interactant intactId="EBI-3914106">
        <id>O00189</id>
    </interactant>
    <interactant intactId="EBI-12313025">
        <id>Q96K76-3</id>
        <label>USP47</label>
    </interactant>
    <organismsDiffer>false</organismsDiffer>
    <experiments>3</experiments>
</comment>
<comment type="subcellular location">
    <subcellularLocation>
        <location evidence="10 12 13">Golgi apparatus</location>
        <location evidence="10 12 13">trans-Golgi network membrane</location>
        <topology evidence="16">Peripheral membrane protein</topology>
    </subcellularLocation>
    <subcellularLocation>
        <location evidence="10">Early endosome</location>
    </subcellularLocation>
    <text evidence="2">Found in soma and dendritic shafts of neuronal cells.</text>
</comment>
<comment type="tissue specificity">
    <text evidence="14">Ubiquitous. Highly expressed in testis and lowly expressed in brain and lung.</text>
</comment>
<comment type="disease" evidence="9">
    <disease id="DI-02560">
        <name>Spastic paraplegia 50, autosomal recessive</name>
        <acronym>SPG50</acronym>
        <description>A form of spastic paraplegia, a neurodegenerative disorder characterized by a slow, gradual, progressive weakness and spasticity of the lower limbs. Rate of progression and the severity of symptoms are quite variable. Initial symptoms may include difficulty with balance, weakness and stiffness in the legs, muscle spasms, and dragging the toes when walking. In some forms of the disorder, bladder symptoms (such as incontinence) may appear, or the weakness and stiffness may spread to other parts of the body. SPG50 affected individuals present postnatally with early infantile hypotonia, delayed psychomotor development, strabismus, lack of independent walking and severe intellectual disability. They develop progressive spasticity of all limbs with generalized hypertonia, hyperreflexia, and extensor plantar responses by the end of the first year of life. Speech is absent or limited. Pseudobulbar signs, such as drooling, stereotypic laughter, and exaggerated jaw jerk, are part of the clinical picture.</description>
        <dbReference type="MIM" id="612936"/>
    </disease>
    <text>The disease is caused by variants affecting the gene represented in this entry.</text>
</comment>
<comment type="similarity">
    <text evidence="15">Belongs to the adaptor complexes medium subunit family.</text>
</comment>
<accession>O00189</accession>
<accession>D6W5U1</accession>
<accession>Q8WV65</accession>
<accession>Q9UHK9</accession>
<gene>
    <name evidence="17" type="primary">AP4M1</name>
    <name type="synonym">MUARP2</name>
</gene>
<proteinExistence type="evidence at protein level"/>
<reference key="1">
    <citation type="journal article" date="1997" name="FEBS Lett.">
        <title>Identification of two new mu-adaptin-related proteins, mu-ARP1 and mu-ARP2.</title>
        <authorList>
            <person name="Wang X."/>
            <person name="Kilimann M.W."/>
        </authorList>
    </citation>
    <scope>NUCLEOTIDE SEQUENCE [MRNA]</scope>
    <scope>TISSUE SPECIFICITY</scope>
    <source>
        <tissue>Brain</tissue>
    </source>
</reference>
<reference key="2">
    <citation type="journal article" date="1999" name="Mol. Biol. Cell">
        <title>Characterization of a fourth adaptor-related protein complex.</title>
        <authorList>
            <person name="Hirst J."/>
            <person name="Bright N.A."/>
            <person name="Rous B."/>
            <person name="Robinson M.S."/>
        </authorList>
    </citation>
    <scope>NUCLEOTIDE SEQUENCE [MRNA]</scope>
    <scope>FUNCTION</scope>
    <scope>SUBUNIT</scope>
    <source>
        <tissue>Brain</tissue>
    </source>
</reference>
<reference key="3">
    <citation type="journal article" date="2001" name="J. Biol. Chem.">
        <title>Signal-binding specificity of the mu4 subunit of the adaptor protein complex, AP-4.</title>
        <authorList>
            <person name="Aguilar R.C."/>
            <person name="Boehm M."/>
            <person name="Gorshkova I."/>
            <person name="Crouch R.J."/>
            <person name="Tomita K."/>
            <person name="Saito T."/>
            <person name="Ohno H."/>
            <person name="Bonifacino J.S."/>
        </authorList>
    </citation>
    <scope>NUCLEOTIDE SEQUENCE [MRNA]</scope>
    <scope>FUNCTION</scope>
    <scope>INTERACTION WITH LAMP2</scope>
    <scope>SUBCELLULAR LOCATION</scope>
    <source>
        <tissue>Spleen</tissue>
    </source>
</reference>
<reference key="4">
    <citation type="submission" date="2005-09" db="EMBL/GenBank/DDBJ databases">
        <authorList>
            <person name="Mural R.J."/>
            <person name="Istrail S."/>
            <person name="Sutton G.G."/>
            <person name="Florea L."/>
            <person name="Halpern A.L."/>
            <person name="Mobarry C.M."/>
            <person name="Lippert R."/>
            <person name="Walenz B."/>
            <person name="Shatkay H."/>
            <person name="Dew I."/>
            <person name="Miller J.R."/>
            <person name="Flanigan M.J."/>
            <person name="Edwards N.J."/>
            <person name="Bolanos R."/>
            <person name="Fasulo D."/>
            <person name="Halldorsson B.V."/>
            <person name="Hannenhalli S."/>
            <person name="Turner R."/>
            <person name="Yooseph S."/>
            <person name="Lu F."/>
            <person name="Nusskern D.R."/>
            <person name="Shue B.C."/>
            <person name="Zheng X.H."/>
            <person name="Zhong F."/>
            <person name="Delcher A.L."/>
            <person name="Huson D.H."/>
            <person name="Kravitz S.A."/>
            <person name="Mouchard L."/>
            <person name="Reinert K."/>
            <person name="Remington K.A."/>
            <person name="Clark A.G."/>
            <person name="Waterman M.S."/>
            <person name="Eichler E.E."/>
            <person name="Adams M.D."/>
            <person name="Hunkapiller M.W."/>
            <person name="Myers E.W."/>
            <person name="Venter J.C."/>
        </authorList>
    </citation>
    <scope>NUCLEOTIDE SEQUENCE [LARGE SCALE GENOMIC DNA]</scope>
</reference>
<reference key="5">
    <citation type="journal article" date="2004" name="Genome Res.">
        <title>The status, quality, and expansion of the NIH full-length cDNA project: the Mammalian Gene Collection (MGC).</title>
        <authorList>
            <consortium name="The MGC Project Team"/>
        </authorList>
    </citation>
    <scope>NUCLEOTIDE SEQUENCE [LARGE SCALE MRNA]</scope>
    <source>
        <tissue>Brain</tissue>
    </source>
</reference>
<reference key="6">
    <citation type="journal article" date="1999" name="J. Biol. Chem.">
        <title>AP-4, a novel protein complex related to clathrin adaptors.</title>
        <authorList>
            <person name="Dell'Angelica E.C."/>
            <person name="Mullins C."/>
            <person name="Bonifacino J.S."/>
        </authorList>
    </citation>
    <scope>FUNCTION</scope>
    <scope>SUBUNIT</scope>
</reference>
<reference key="7">
    <citation type="journal article" date="2009" name="Am. J. Hum. Genet.">
        <title>Mutation in the AP4M1 gene provides a model for neuroaxonal injury in cerebral palsy.</title>
        <authorList>
            <person name="Verkerk A.J."/>
            <person name="Schot R."/>
            <person name="Dumee B."/>
            <person name="Schellekens K."/>
            <person name="Swagemakers S."/>
            <person name="Bertoli-Avella A.M."/>
            <person name="Lequin M.H."/>
            <person name="Dudink J."/>
            <person name="Govaert P."/>
            <person name="van Zwol A.L."/>
            <person name="Hirst J."/>
            <person name="Wessels M.W."/>
            <person name="Catsman-Berrevoets C."/>
            <person name="Verheijen F.W."/>
            <person name="de Graaff E."/>
            <person name="de Coo I.F."/>
            <person name="Kros J.M."/>
            <person name="Willemsen R."/>
            <person name="Willems P.J."/>
            <person name="van der Spek P.J."/>
            <person name="Mancini G.M."/>
        </authorList>
    </citation>
    <scope>INVOLVEMENT IN SPG50</scope>
</reference>
<reference key="8">
    <citation type="journal article" date="2002" name="Nat. Cell Biol.">
        <title>AP-4 binds basolateral signals and participates in basolateral sorting in epithelial MDCK cells.</title>
        <authorList>
            <person name="Simmen T."/>
            <person name="Hoening S."/>
            <person name="Icking A."/>
            <person name="Tikkanen R."/>
            <person name="Hunziker W."/>
        </authorList>
    </citation>
    <scope>FUNCTION</scope>
    <scope>SUBUNIT</scope>
</reference>
<reference key="9">
    <citation type="journal article" date="2015" name="Am. J. Hum. Genet.">
        <title>Association between rare variants in AP4E1, a component of intracellular trafficking, and persistent stuttering.</title>
        <authorList>
            <person name="Raza M.H."/>
            <person name="Mattera R."/>
            <person name="Morell R."/>
            <person name="Sainz E."/>
            <person name="Rahn R."/>
            <person name="Gutierrez J."/>
            <person name="Paris E."/>
            <person name="Root J."/>
            <person name="Solomon B."/>
            <person name="Brewer C."/>
            <person name="Basra M.A."/>
            <person name="Khan S."/>
            <person name="Riazuddin S."/>
            <person name="Braun A."/>
            <person name="Bonifacino J.S."/>
            <person name="Drayna D."/>
        </authorList>
    </citation>
    <scope>FUNCTION</scope>
    <scope>INTERACTION WITH NAGPA</scope>
</reference>
<reference key="10">
    <citation type="journal article" date="2017" name="Proc. Natl. Acad. Sci. U.S.A.">
        <title>AP-4 mediates export of ATG9A from the trans-Golgi network to promote autophagosome formation.</title>
        <authorList>
            <person name="Mattera R."/>
            <person name="Park S.Y."/>
            <person name="De Pace R."/>
            <person name="Guardia C.M."/>
            <person name="Bonifacino J.S."/>
        </authorList>
    </citation>
    <scope>INTERACTION WITH ATG9A</scope>
    <scope>SUBCELLULAR LOCATION</scope>
</reference>
<reference key="11">
    <citation type="journal article" date="2020" name="Mol. Biol. Cell">
        <title>The FTS-Hook-FHIP (FHF) complex interacts with AP-4 to mediate perinuclear distribution of AP-4 and its cargo ATG9A.</title>
        <authorList>
            <person name="Mattera R."/>
            <person name="Williamson C.D."/>
            <person name="Ren X."/>
            <person name="Bonifacino J.S."/>
        </authorList>
    </citation>
    <scope>INTERACTION WITH HOOK1 AND HOOK2</scope>
    <scope>SUBCELLULAR LOCATION</scope>
</reference>
<reference key="12">
    <citation type="journal article" date="2010" name="Dev. Cell">
        <title>Sorting of the Alzheimer's disease amyloid precursor protein mediated by the AP-4 complex.</title>
        <authorList>
            <person name="Burgos P.V."/>
            <person name="Mardones G.A."/>
            <person name="Rojas A.L."/>
            <person name="daSilva L.L."/>
            <person name="Prabhu Y."/>
            <person name="Hurley J.H."/>
            <person name="Bonifacino J.S."/>
        </authorList>
    </citation>
    <scope>X-RAY CRYSTALLOGRAPHY (1.6 ANGSTROMS) OF 160-453 IN COMPLEX WITH APP PEPTIDE</scope>
    <scope>FUNCTION</scope>
    <scope>SUBCELLULAR LOCATION</scope>
    <scope>MUTAGENESIS OF PHE-255 AND ARG-283</scope>
    <scope>SUBUNIT</scope>
</reference>
<keyword id="KW-0002">3D-structure</keyword>
<keyword id="KW-0967">Endosome</keyword>
<keyword id="KW-0333">Golgi apparatus</keyword>
<keyword id="KW-0890">Hereditary spastic paraplegia</keyword>
<keyword id="KW-0472">Membrane</keyword>
<keyword id="KW-0523">Neurodegeneration</keyword>
<keyword id="KW-0653">Protein transport</keyword>
<keyword id="KW-1267">Proteomics identification</keyword>
<keyword id="KW-1185">Reference proteome</keyword>
<keyword id="KW-0813">Transport</keyword>
<feature type="chain" id="PRO_0000193787" description="AP-4 complex subunit mu-1">
    <location>
        <begin position="1"/>
        <end position="453"/>
    </location>
</feature>
<feature type="domain" description="MHD" evidence="4">
    <location>
        <begin position="184"/>
        <end position="452"/>
    </location>
</feature>
<feature type="mutagenesis site" description="Abolishes interaction with APP." evidence="10">
    <original>F</original>
    <variation>A</variation>
    <location>
        <position position="255"/>
    </location>
</feature>
<feature type="mutagenesis site" description="Strongly reduced interaction with APP." evidence="10">
    <original>R</original>
    <variation>D</variation>
    <location>
        <position position="283"/>
    </location>
</feature>
<feature type="sequence conflict" description="In Ref. 2; AAD43328." evidence="15" ref="2">
    <original>R</original>
    <variation>G</variation>
    <location>
        <position position="338"/>
    </location>
</feature>
<feature type="sequence conflict" description="In Ref. 1; CAA69667 and 3; AAD25869." evidence="15" ref="1 3">
    <original>Q</original>
    <variation>R</variation>
    <location>
        <position position="345"/>
    </location>
</feature>
<feature type="sequence conflict" description="In Ref. 2; AAD43328." evidence="15" ref="2">
    <original>L</original>
    <variation>M</variation>
    <location>
        <position position="400"/>
    </location>
</feature>
<feature type="sequence conflict" description="In Ref. 2; AAD43328." evidence="15" ref="2">
    <original>S</original>
    <variation>C</variation>
    <location>
        <position position="417"/>
    </location>
</feature>
<feature type="strand" evidence="18">
    <location>
        <begin position="186"/>
        <end position="199"/>
    </location>
</feature>
<feature type="strand" evidence="18">
    <location>
        <begin position="205"/>
        <end position="218"/>
    </location>
</feature>
<feature type="strand" evidence="18">
    <location>
        <begin position="225"/>
        <end position="230"/>
    </location>
</feature>
<feature type="strand" evidence="18">
    <location>
        <begin position="235"/>
        <end position="237"/>
    </location>
</feature>
<feature type="turn" evidence="18">
    <location>
        <begin position="240"/>
        <end position="242"/>
    </location>
</feature>
<feature type="strand" evidence="18">
    <location>
        <begin position="246"/>
        <end position="256"/>
    </location>
</feature>
<feature type="helix" evidence="18">
    <location>
        <begin position="264"/>
        <end position="267"/>
    </location>
</feature>
<feature type="strand" evidence="18">
    <location>
        <begin position="269"/>
        <end position="272"/>
    </location>
</feature>
<feature type="strand" evidence="18">
    <location>
        <begin position="276"/>
        <end position="286"/>
    </location>
</feature>
<feature type="strand" evidence="18">
    <location>
        <begin position="295"/>
        <end position="304"/>
    </location>
</feature>
<feature type="turn" evidence="18">
    <location>
        <begin position="306"/>
        <end position="308"/>
    </location>
</feature>
<feature type="strand" evidence="18">
    <location>
        <begin position="309"/>
        <end position="319"/>
    </location>
</feature>
<feature type="strand" evidence="18">
    <location>
        <begin position="326"/>
        <end position="335"/>
    </location>
</feature>
<feature type="strand" evidence="18">
    <location>
        <begin position="341"/>
        <end position="349"/>
    </location>
</feature>
<feature type="strand" evidence="18">
    <location>
        <begin position="353"/>
        <end position="357"/>
    </location>
</feature>
<feature type="strand" evidence="18">
    <location>
        <begin position="360"/>
        <end position="365"/>
    </location>
</feature>
<feature type="strand" evidence="18">
    <location>
        <begin position="373"/>
        <end position="381"/>
    </location>
</feature>
<feature type="strand" evidence="18">
    <location>
        <begin position="405"/>
        <end position="412"/>
    </location>
</feature>
<feature type="strand" evidence="18">
    <location>
        <begin position="421"/>
        <end position="427"/>
    </location>
</feature>
<feature type="strand" evidence="18">
    <location>
        <begin position="437"/>
        <end position="451"/>
    </location>
</feature>
<evidence type="ECO:0000250" key="1">
    <source>
        <dbReference type="UniProtKB" id="E2RED8"/>
    </source>
</evidence>
<evidence type="ECO:0000250" key="2">
    <source>
        <dbReference type="UniProtKB" id="Q2PWT8"/>
    </source>
</evidence>
<evidence type="ECO:0000250" key="3">
    <source>
        <dbReference type="UniProtKB" id="Q9JKC7"/>
    </source>
</evidence>
<evidence type="ECO:0000255" key="4">
    <source>
        <dbReference type="PROSITE-ProRule" id="PRU00404"/>
    </source>
</evidence>
<evidence type="ECO:0000269" key="5">
    <source>
    </source>
</evidence>
<evidence type="ECO:0000269" key="6">
    <source>
    </source>
</evidence>
<evidence type="ECO:0000269" key="7">
    <source>
    </source>
</evidence>
<evidence type="ECO:0000269" key="8">
    <source>
    </source>
</evidence>
<evidence type="ECO:0000269" key="9">
    <source>
    </source>
</evidence>
<evidence type="ECO:0000269" key="10">
    <source>
    </source>
</evidence>
<evidence type="ECO:0000269" key="11">
    <source>
    </source>
</evidence>
<evidence type="ECO:0000269" key="12">
    <source>
    </source>
</evidence>
<evidence type="ECO:0000269" key="13">
    <source>
    </source>
</evidence>
<evidence type="ECO:0000269" key="14">
    <source>
    </source>
</evidence>
<evidence type="ECO:0000305" key="15"/>
<evidence type="ECO:0000305" key="16">
    <source>
    </source>
</evidence>
<evidence type="ECO:0000312" key="17">
    <source>
        <dbReference type="HGNC" id="HGNC:574"/>
    </source>
</evidence>
<evidence type="ECO:0007829" key="18">
    <source>
        <dbReference type="PDB" id="3L81"/>
    </source>
</evidence>